<gene>
    <name evidence="1" type="primary">accD</name>
    <name type="ordered locus">PMT9312_0792</name>
</gene>
<accession>Q31B93</accession>
<comment type="function">
    <text evidence="1">Component of the acetyl coenzyme A carboxylase (ACC) complex. Biotin carboxylase (BC) catalyzes the carboxylation of biotin on its carrier protein (BCCP) and then the CO(2) group is transferred by the transcarboxylase to acetyl-CoA to form malonyl-CoA.</text>
</comment>
<comment type="catalytic activity">
    <reaction evidence="1">
        <text>N(6)-carboxybiotinyl-L-lysyl-[protein] + acetyl-CoA = N(6)-biotinyl-L-lysyl-[protein] + malonyl-CoA</text>
        <dbReference type="Rhea" id="RHEA:54728"/>
        <dbReference type="Rhea" id="RHEA-COMP:10505"/>
        <dbReference type="Rhea" id="RHEA-COMP:10506"/>
        <dbReference type="ChEBI" id="CHEBI:57288"/>
        <dbReference type="ChEBI" id="CHEBI:57384"/>
        <dbReference type="ChEBI" id="CHEBI:83144"/>
        <dbReference type="ChEBI" id="CHEBI:83145"/>
        <dbReference type="EC" id="2.1.3.15"/>
    </reaction>
</comment>
<comment type="cofactor">
    <cofactor evidence="1">
        <name>Zn(2+)</name>
        <dbReference type="ChEBI" id="CHEBI:29105"/>
    </cofactor>
    <text evidence="1">Binds 1 zinc ion per subunit.</text>
</comment>
<comment type="pathway">
    <text evidence="1">Lipid metabolism; malonyl-CoA biosynthesis; malonyl-CoA from acetyl-CoA: step 1/1.</text>
</comment>
<comment type="subunit">
    <text evidence="1">Acetyl-CoA carboxylase is a heterohexamer composed of biotin carboxyl carrier protein (AccB), biotin carboxylase (AccC) and two subunits each of ACCase subunit alpha (AccA) and ACCase subunit beta (AccD).</text>
</comment>
<comment type="subcellular location">
    <subcellularLocation>
        <location evidence="1">Cytoplasm</location>
    </subcellularLocation>
</comment>
<comment type="similarity">
    <text evidence="1">Belongs to the AccD/PCCB family.</text>
</comment>
<proteinExistence type="inferred from homology"/>
<keyword id="KW-0067">ATP-binding</keyword>
<keyword id="KW-0963">Cytoplasm</keyword>
<keyword id="KW-0275">Fatty acid biosynthesis</keyword>
<keyword id="KW-0276">Fatty acid metabolism</keyword>
<keyword id="KW-0444">Lipid biosynthesis</keyword>
<keyword id="KW-0443">Lipid metabolism</keyword>
<keyword id="KW-0479">Metal-binding</keyword>
<keyword id="KW-0547">Nucleotide-binding</keyword>
<keyword id="KW-0808">Transferase</keyword>
<keyword id="KW-0862">Zinc</keyword>
<keyword id="KW-0863">Zinc-finger</keyword>
<sequence length="293" mass="32468">MSLIDWFAARRKDQFVGKVSQDTDEGDGLWVKCSECSQVAYRKDLISNFNVCSNCGHHNRINSDERINIIADKNSFKEFDSSLSPTDPLGFKDRRSYADRIKESQAGTGLRDGVITGFCSVNSMPLALAVMDFRFMGGSMGSVVGEKITRIIERATIENYPILIVCASGGARMQEGMLSLMQMAKISGALKKHKEKNLLYMPLLTHPTTGGVTASFAMLGDLILAEPKALIGFAGRRVIEQTLREKLPDNFQTAEYLLEHGFVDVIVKRKDLKTTLTKILKIHGVKELAEANI</sequence>
<reference key="1">
    <citation type="journal article" date="2006" name="Science">
        <title>Genomic islands and the ecology and evolution of Prochlorococcus.</title>
        <authorList>
            <person name="Coleman M.L."/>
            <person name="Sullivan M.B."/>
            <person name="Martiny A.C."/>
            <person name="Steglich C."/>
            <person name="Barry K."/>
            <person name="Delong E.F."/>
            <person name="Chisholm S.W."/>
        </authorList>
    </citation>
    <scope>NUCLEOTIDE SEQUENCE [LARGE SCALE GENOMIC DNA]</scope>
    <source>
        <strain>MIT 9312</strain>
    </source>
</reference>
<protein>
    <recommendedName>
        <fullName evidence="1">Acetyl-coenzyme A carboxylase carboxyl transferase subunit beta</fullName>
        <shortName evidence="1">ACCase subunit beta</shortName>
        <shortName evidence="1">Acetyl-CoA carboxylase carboxyltransferase subunit beta</shortName>
        <ecNumber evidence="1">2.1.3.15</ecNumber>
    </recommendedName>
</protein>
<organism>
    <name type="scientific">Prochlorococcus marinus (strain MIT 9312)</name>
    <dbReference type="NCBI Taxonomy" id="74546"/>
    <lineage>
        <taxon>Bacteria</taxon>
        <taxon>Bacillati</taxon>
        <taxon>Cyanobacteriota</taxon>
        <taxon>Cyanophyceae</taxon>
        <taxon>Synechococcales</taxon>
        <taxon>Prochlorococcaceae</taxon>
        <taxon>Prochlorococcus</taxon>
    </lineage>
</organism>
<name>ACCD_PROM9</name>
<feature type="chain" id="PRO_0000359023" description="Acetyl-coenzyme A carboxylase carboxyl transferase subunit beta">
    <location>
        <begin position="1"/>
        <end position="293"/>
    </location>
</feature>
<feature type="domain" description="CoA carboxyltransferase N-terminal" evidence="2">
    <location>
        <begin position="29"/>
        <end position="293"/>
    </location>
</feature>
<feature type="zinc finger region" description="C4-type" evidence="1">
    <location>
        <begin position="33"/>
        <end position="55"/>
    </location>
</feature>
<feature type="binding site" evidence="1">
    <location>
        <position position="33"/>
    </location>
    <ligand>
        <name>Zn(2+)</name>
        <dbReference type="ChEBI" id="CHEBI:29105"/>
    </ligand>
</feature>
<feature type="binding site" evidence="1">
    <location>
        <position position="36"/>
    </location>
    <ligand>
        <name>Zn(2+)</name>
        <dbReference type="ChEBI" id="CHEBI:29105"/>
    </ligand>
</feature>
<feature type="binding site" evidence="1">
    <location>
        <position position="52"/>
    </location>
    <ligand>
        <name>Zn(2+)</name>
        <dbReference type="ChEBI" id="CHEBI:29105"/>
    </ligand>
</feature>
<feature type="binding site" evidence="1">
    <location>
        <position position="55"/>
    </location>
    <ligand>
        <name>Zn(2+)</name>
        <dbReference type="ChEBI" id="CHEBI:29105"/>
    </ligand>
</feature>
<dbReference type="EC" id="2.1.3.15" evidence="1"/>
<dbReference type="EMBL" id="CP000111">
    <property type="protein sequence ID" value="ABB49852.1"/>
    <property type="molecule type" value="Genomic_DNA"/>
</dbReference>
<dbReference type="RefSeq" id="WP_011376347.1">
    <property type="nucleotide sequence ID" value="NC_007577.1"/>
</dbReference>
<dbReference type="SMR" id="Q31B93"/>
<dbReference type="STRING" id="74546.PMT9312_0792"/>
<dbReference type="KEGG" id="pmi:PMT9312_0792"/>
<dbReference type="eggNOG" id="COG0777">
    <property type="taxonomic scope" value="Bacteria"/>
</dbReference>
<dbReference type="HOGENOM" id="CLU_015486_1_1_3"/>
<dbReference type="OrthoDB" id="9772975at2"/>
<dbReference type="UniPathway" id="UPA00655">
    <property type="reaction ID" value="UER00711"/>
</dbReference>
<dbReference type="Proteomes" id="UP000002715">
    <property type="component" value="Chromosome"/>
</dbReference>
<dbReference type="GO" id="GO:0009317">
    <property type="term" value="C:acetyl-CoA carboxylase complex"/>
    <property type="evidence" value="ECO:0007669"/>
    <property type="project" value="InterPro"/>
</dbReference>
<dbReference type="GO" id="GO:0003989">
    <property type="term" value="F:acetyl-CoA carboxylase activity"/>
    <property type="evidence" value="ECO:0007669"/>
    <property type="project" value="InterPro"/>
</dbReference>
<dbReference type="GO" id="GO:0005524">
    <property type="term" value="F:ATP binding"/>
    <property type="evidence" value="ECO:0007669"/>
    <property type="project" value="UniProtKB-KW"/>
</dbReference>
<dbReference type="GO" id="GO:0016743">
    <property type="term" value="F:carboxyl- or carbamoyltransferase activity"/>
    <property type="evidence" value="ECO:0007669"/>
    <property type="project" value="UniProtKB-UniRule"/>
</dbReference>
<dbReference type="GO" id="GO:0008270">
    <property type="term" value="F:zinc ion binding"/>
    <property type="evidence" value="ECO:0007669"/>
    <property type="project" value="UniProtKB-UniRule"/>
</dbReference>
<dbReference type="GO" id="GO:0006633">
    <property type="term" value="P:fatty acid biosynthetic process"/>
    <property type="evidence" value="ECO:0007669"/>
    <property type="project" value="UniProtKB-KW"/>
</dbReference>
<dbReference type="GO" id="GO:2001295">
    <property type="term" value="P:malonyl-CoA biosynthetic process"/>
    <property type="evidence" value="ECO:0007669"/>
    <property type="project" value="UniProtKB-UniRule"/>
</dbReference>
<dbReference type="Gene3D" id="3.90.226.10">
    <property type="entry name" value="2-enoyl-CoA Hydratase, Chain A, domain 1"/>
    <property type="match status" value="1"/>
</dbReference>
<dbReference type="HAMAP" id="MF_01395">
    <property type="entry name" value="AcetylCoA_CT_beta"/>
    <property type="match status" value="1"/>
</dbReference>
<dbReference type="InterPro" id="IPR034733">
    <property type="entry name" value="AcCoA_carboxyl_beta"/>
</dbReference>
<dbReference type="InterPro" id="IPR000438">
    <property type="entry name" value="Acetyl_CoA_COase_Trfase_b_su"/>
</dbReference>
<dbReference type="InterPro" id="IPR029045">
    <property type="entry name" value="ClpP/crotonase-like_dom_sf"/>
</dbReference>
<dbReference type="InterPro" id="IPR011762">
    <property type="entry name" value="COA_CT_N"/>
</dbReference>
<dbReference type="InterPro" id="IPR041010">
    <property type="entry name" value="Znf-ACC"/>
</dbReference>
<dbReference type="NCBIfam" id="TIGR00515">
    <property type="entry name" value="accD"/>
    <property type="match status" value="1"/>
</dbReference>
<dbReference type="PANTHER" id="PTHR42995">
    <property type="entry name" value="ACETYL-COENZYME A CARBOXYLASE CARBOXYL TRANSFERASE SUBUNIT BETA, CHLOROPLASTIC"/>
    <property type="match status" value="1"/>
</dbReference>
<dbReference type="PANTHER" id="PTHR42995:SF5">
    <property type="entry name" value="ACETYL-COENZYME A CARBOXYLASE CARBOXYL TRANSFERASE SUBUNIT BETA, CHLOROPLASTIC"/>
    <property type="match status" value="1"/>
</dbReference>
<dbReference type="Pfam" id="PF01039">
    <property type="entry name" value="Carboxyl_trans"/>
    <property type="match status" value="1"/>
</dbReference>
<dbReference type="Pfam" id="PF17848">
    <property type="entry name" value="Zn_ribbon_ACC"/>
    <property type="match status" value="1"/>
</dbReference>
<dbReference type="PRINTS" id="PR01070">
    <property type="entry name" value="ACCCTRFRASEB"/>
</dbReference>
<dbReference type="SUPFAM" id="SSF52096">
    <property type="entry name" value="ClpP/crotonase"/>
    <property type="match status" value="1"/>
</dbReference>
<dbReference type="PROSITE" id="PS50980">
    <property type="entry name" value="COA_CT_NTER"/>
    <property type="match status" value="1"/>
</dbReference>
<evidence type="ECO:0000255" key="1">
    <source>
        <dbReference type="HAMAP-Rule" id="MF_01395"/>
    </source>
</evidence>
<evidence type="ECO:0000255" key="2">
    <source>
        <dbReference type="PROSITE-ProRule" id="PRU01136"/>
    </source>
</evidence>